<sequence length="881" mass="99822">MYMSTDEIREKFLQFFESKGHLRLPSFSLIPKNDKSLLLINAGMAPLKPYFLGIEEPPRRRITTCQKCIRTPDIDKVGKTARHATFFEMLGNFSFGDYFKKEAITWAWEFVTEILKLPKERLWVTIYEEDDEAFEIWHKEVGLEEGRIKRMGKEDNFWEIGTGPCGPCSEIYFDRGVDKGCGKETCGIGCDCDRYVEFWNLVFTQFDKDENGVYHRLKNPNIDTGMGLERIAAIMQGVDSLFDIDIVKAIRDKICEITGCEYGKDSEKDVSIRVITDHIRGTVFMIGDGILPSNEGRGYVLRRLIRRAARHGRMLGKRETFLHLIVDTVIEAYKSPYPELIQKGEYIKKVLYNEESRFNQTIDIGLELLENEIDRLKKNKENVLKGEIAFKLYDTYGFPLDLTREIAAEKGIIVDQAGFDRLMQEQKERARMAQKELENIGWKDINITIEDEVETVFVGYDTLETQSRVLKIFSNDDEVSYAKEGDICYIILDKTPFYAESGGQVADKGVLETEGGVAEVLDVKKGPKGTILHKAKVIKGEIAVDNNIFAKVNKNLRLATMKNHTATHLLHSSLRRILGEHATQSGSLVEPERLRFDFAHFEPLSEEQIVEIEKMVNDIIQQAIPVEKIQTDLDSAIKMGATALFDEKYSNIVRVIKIGDFSMELCGGTHVDNTGQIGMFKIISESSVAAGVRRIEAITGNKVYEFMLNNQKVLKDIRNKLKANSDSEIVAKINQLEERITALEKELEKHKLLLVDNELSLLYNEGLQIGEFRLIINKKETHDTDYIRLLTDRVREKDSKAIVLNLIKQDKKAIVLMACSKEAVKKGIDCGKTVKDVCEVLGGKGGGRPDFAQGGGNKIENLDLAAQRAIELIKSSIEGGS</sequence>
<proteinExistence type="inferred from homology"/>
<organism>
    <name type="scientific">Caldicellulosiruptor saccharolyticus (strain ATCC 43494 / DSM 8903 / Tp8T 6331)</name>
    <dbReference type="NCBI Taxonomy" id="351627"/>
    <lineage>
        <taxon>Bacteria</taxon>
        <taxon>Bacillati</taxon>
        <taxon>Bacillota</taxon>
        <taxon>Bacillota incertae sedis</taxon>
        <taxon>Caldicellulosiruptorales</taxon>
        <taxon>Caldicellulosiruptoraceae</taxon>
        <taxon>Caldicellulosiruptor</taxon>
    </lineage>
</organism>
<keyword id="KW-0030">Aminoacyl-tRNA synthetase</keyword>
<keyword id="KW-0067">ATP-binding</keyword>
<keyword id="KW-0963">Cytoplasm</keyword>
<keyword id="KW-0436">Ligase</keyword>
<keyword id="KW-0479">Metal-binding</keyword>
<keyword id="KW-0547">Nucleotide-binding</keyword>
<keyword id="KW-0648">Protein biosynthesis</keyword>
<keyword id="KW-0694">RNA-binding</keyword>
<keyword id="KW-0820">tRNA-binding</keyword>
<keyword id="KW-0862">Zinc</keyword>
<gene>
    <name evidence="1" type="primary">alaS</name>
    <name type="ordered locus">Csac_1894</name>
</gene>
<feature type="chain" id="PRO_0000347537" description="Alanine--tRNA ligase">
    <location>
        <begin position="1"/>
        <end position="881"/>
    </location>
</feature>
<feature type="binding site" evidence="1">
    <location>
        <position position="564"/>
    </location>
    <ligand>
        <name>Zn(2+)</name>
        <dbReference type="ChEBI" id="CHEBI:29105"/>
    </ligand>
</feature>
<feature type="binding site" evidence="1">
    <location>
        <position position="568"/>
    </location>
    <ligand>
        <name>Zn(2+)</name>
        <dbReference type="ChEBI" id="CHEBI:29105"/>
    </ligand>
</feature>
<feature type="binding site" evidence="1">
    <location>
        <position position="666"/>
    </location>
    <ligand>
        <name>Zn(2+)</name>
        <dbReference type="ChEBI" id="CHEBI:29105"/>
    </ligand>
</feature>
<feature type="binding site" evidence="1">
    <location>
        <position position="670"/>
    </location>
    <ligand>
        <name>Zn(2+)</name>
        <dbReference type="ChEBI" id="CHEBI:29105"/>
    </ligand>
</feature>
<accession>A4XKP4</accession>
<reference key="1">
    <citation type="submission" date="2007-04" db="EMBL/GenBank/DDBJ databases">
        <title>Genome sequence of the thermophilic hydrogen-producing bacterium Caldicellulosiruptor saccharolyticus DSM 8903.</title>
        <authorList>
            <person name="Copeland A."/>
            <person name="Lucas S."/>
            <person name="Lapidus A."/>
            <person name="Barry K."/>
            <person name="Detter J.C."/>
            <person name="Glavina del Rio T."/>
            <person name="Hammon N."/>
            <person name="Israni S."/>
            <person name="Dalin E."/>
            <person name="Tice H."/>
            <person name="Pitluck S."/>
            <person name="Kiss H."/>
            <person name="Brettin T."/>
            <person name="Bruce D."/>
            <person name="Han C."/>
            <person name="Schmutz J."/>
            <person name="Larimer F."/>
            <person name="Land M."/>
            <person name="Hauser L."/>
            <person name="Kyrpides N."/>
            <person name="Lykidis A."/>
            <person name="van de Werken H.J.G."/>
            <person name="Verhaart M.R.A."/>
            <person name="VanFossen A.L."/>
            <person name="Lewis D.L."/>
            <person name="Nichols J.D."/>
            <person name="Goorissen H.P."/>
            <person name="van Niel E.W.J."/>
            <person name="Stams F.J.M."/>
            <person name="Willquist K.U."/>
            <person name="Ward D.E."/>
            <person name="van der Oost J."/>
            <person name="Kelly R.M."/>
            <person name="Kengen S.M.W."/>
            <person name="Richardson P."/>
        </authorList>
    </citation>
    <scope>NUCLEOTIDE SEQUENCE [LARGE SCALE GENOMIC DNA]</scope>
    <source>
        <strain>ATCC 43494 / DSM 8903 / Tp8T 6331</strain>
    </source>
</reference>
<name>SYA_CALS8</name>
<dbReference type="EC" id="6.1.1.7" evidence="1"/>
<dbReference type="EMBL" id="CP000679">
    <property type="protein sequence ID" value="ABP67479.1"/>
    <property type="molecule type" value="Genomic_DNA"/>
</dbReference>
<dbReference type="RefSeq" id="WP_011917415.1">
    <property type="nucleotide sequence ID" value="NC_009437.1"/>
</dbReference>
<dbReference type="SMR" id="A4XKP4"/>
<dbReference type="STRING" id="351627.Csac_1894"/>
<dbReference type="KEGG" id="csc:Csac_1894"/>
<dbReference type="eggNOG" id="COG0013">
    <property type="taxonomic scope" value="Bacteria"/>
</dbReference>
<dbReference type="HOGENOM" id="CLU_004485_1_1_9"/>
<dbReference type="OrthoDB" id="9803884at2"/>
<dbReference type="Proteomes" id="UP000000256">
    <property type="component" value="Chromosome"/>
</dbReference>
<dbReference type="GO" id="GO:0005829">
    <property type="term" value="C:cytosol"/>
    <property type="evidence" value="ECO:0007669"/>
    <property type="project" value="TreeGrafter"/>
</dbReference>
<dbReference type="GO" id="GO:0004813">
    <property type="term" value="F:alanine-tRNA ligase activity"/>
    <property type="evidence" value="ECO:0007669"/>
    <property type="project" value="UniProtKB-UniRule"/>
</dbReference>
<dbReference type="GO" id="GO:0002161">
    <property type="term" value="F:aminoacyl-tRNA deacylase activity"/>
    <property type="evidence" value="ECO:0007669"/>
    <property type="project" value="TreeGrafter"/>
</dbReference>
<dbReference type="GO" id="GO:0005524">
    <property type="term" value="F:ATP binding"/>
    <property type="evidence" value="ECO:0007669"/>
    <property type="project" value="UniProtKB-UniRule"/>
</dbReference>
<dbReference type="GO" id="GO:0140096">
    <property type="term" value="F:catalytic activity, acting on a protein"/>
    <property type="evidence" value="ECO:0007669"/>
    <property type="project" value="UniProtKB-ARBA"/>
</dbReference>
<dbReference type="GO" id="GO:0016740">
    <property type="term" value="F:transferase activity"/>
    <property type="evidence" value="ECO:0007669"/>
    <property type="project" value="UniProtKB-ARBA"/>
</dbReference>
<dbReference type="GO" id="GO:0000049">
    <property type="term" value="F:tRNA binding"/>
    <property type="evidence" value="ECO:0007669"/>
    <property type="project" value="UniProtKB-KW"/>
</dbReference>
<dbReference type="GO" id="GO:0008270">
    <property type="term" value="F:zinc ion binding"/>
    <property type="evidence" value="ECO:0007669"/>
    <property type="project" value="UniProtKB-UniRule"/>
</dbReference>
<dbReference type="GO" id="GO:0006419">
    <property type="term" value="P:alanyl-tRNA aminoacylation"/>
    <property type="evidence" value="ECO:0007669"/>
    <property type="project" value="UniProtKB-UniRule"/>
</dbReference>
<dbReference type="CDD" id="cd00673">
    <property type="entry name" value="AlaRS_core"/>
    <property type="match status" value="1"/>
</dbReference>
<dbReference type="FunFam" id="2.40.30.130:FF:000001">
    <property type="entry name" value="Alanine--tRNA ligase"/>
    <property type="match status" value="1"/>
</dbReference>
<dbReference type="FunFam" id="3.10.310.40:FF:000001">
    <property type="entry name" value="Alanine--tRNA ligase"/>
    <property type="match status" value="1"/>
</dbReference>
<dbReference type="FunFam" id="3.30.54.20:FF:000001">
    <property type="entry name" value="Alanine--tRNA ligase"/>
    <property type="match status" value="1"/>
</dbReference>
<dbReference type="FunFam" id="3.30.930.10:FF:000004">
    <property type="entry name" value="Alanine--tRNA ligase"/>
    <property type="match status" value="1"/>
</dbReference>
<dbReference type="FunFam" id="3.30.980.10:FF:000004">
    <property type="entry name" value="Alanine--tRNA ligase, cytoplasmic"/>
    <property type="match status" value="1"/>
</dbReference>
<dbReference type="Gene3D" id="2.40.30.130">
    <property type="match status" value="1"/>
</dbReference>
<dbReference type="Gene3D" id="3.10.310.40">
    <property type="match status" value="1"/>
</dbReference>
<dbReference type="Gene3D" id="3.30.54.20">
    <property type="match status" value="1"/>
</dbReference>
<dbReference type="Gene3D" id="3.30.930.10">
    <property type="entry name" value="Bira Bifunctional Protein, Domain 2"/>
    <property type="match status" value="1"/>
</dbReference>
<dbReference type="Gene3D" id="3.30.980.10">
    <property type="entry name" value="Threonyl-trna Synthetase, Chain A, domain 2"/>
    <property type="match status" value="1"/>
</dbReference>
<dbReference type="HAMAP" id="MF_00036_B">
    <property type="entry name" value="Ala_tRNA_synth_B"/>
    <property type="match status" value="1"/>
</dbReference>
<dbReference type="InterPro" id="IPR045864">
    <property type="entry name" value="aa-tRNA-synth_II/BPL/LPL"/>
</dbReference>
<dbReference type="InterPro" id="IPR002318">
    <property type="entry name" value="Ala-tRNA-lgiase_IIc"/>
</dbReference>
<dbReference type="InterPro" id="IPR018162">
    <property type="entry name" value="Ala-tRNA-ligase_IIc_anticod-bd"/>
</dbReference>
<dbReference type="InterPro" id="IPR018165">
    <property type="entry name" value="Ala-tRNA-synth_IIc_core"/>
</dbReference>
<dbReference type="InterPro" id="IPR018164">
    <property type="entry name" value="Ala-tRNA-synth_IIc_N"/>
</dbReference>
<dbReference type="InterPro" id="IPR050058">
    <property type="entry name" value="Ala-tRNA_ligase"/>
</dbReference>
<dbReference type="InterPro" id="IPR023033">
    <property type="entry name" value="Ala_tRNA_ligase_euk/bac"/>
</dbReference>
<dbReference type="InterPro" id="IPR003156">
    <property type="entry name" value="DHHA1_dom"/>
</dbReference>
<dbReference type="InterPro" id="IPR018163">
    <property type="entry name" value="Thr/Ala-tRNA-synth_IIc_edit"/>
</dbReference>
<dbReference type="InterPro" id="IPR009000">
    <property type="entry name" value="Transl_B-barrel_sf"/>
</dbReference>
<dbReference type="InterPro" id="IPR012947">
    <property type="entry name" value="tRNA_SAD"/>
</dbReference>
<dbReference type="NCBIfam" id="TIGR00344">
    <property type="entry name" value="alaS"/>
    <property type="match status" value="1"/>
</dbReference>
<dbReference type="PANTHER" id="PTHR11777:SF9">
    <property type="entry name" value="ALANINE--TRNA LIGASE, CYTOPLASMIC"/>
    <property type="match status" value="1"/>
</dbReference>
<dbReference type="PANTHER" id="PTHR11777">
    <property type="entry name" value="ALANYL-TRNA SYNTHETASE"/>
    <property type="match status" value="1"/>
</dbReference>
<dbReference type="Pfam" id="PF02272">
    <property type="entry name" value="DHHA1"/>
    <property type="match status" value="1"/>
</dbReference>
<dbReference type="Pfam" id="PF01411">
    <property type="entry name" value="tRNA-synt_2c"/>
    <property type="match status" value="1"/>
</dbReference>
<dbReference type="Pfam" id="PF07973">
    <property type="entry name" value="tRNA_SAD"/>
    <property type="match status" value="1"/>
</dbReference>
<dbReference type="PRINTS" id="PR00980">
    <property type="entry name" value="TRNASYNTHALA"/>
</dbReference>
<dbReference type="SMART" id="SM00863">
    <property type="entry name" value="tRNA_SAD"/>
    <property type="match status" value="1"/>
</dbReference>
<dbReference type="SUPFAM" id="SSF55681">
    <property type="entry name" value="Class II aaRS and biotin synthetases"/>
    <property type="match status" value="1"/>
</dbReference>
<dbReference type="SUPFAM" id="SSF101353">
    <property type="entry name" value="Putative anticodon-binding domain of alanyl-tRNA synthetase (AlaRS)"/>
    <property type="match status" value="1"/>
</dbReference>
<dbReference type="SUPFAM" id="SSF55186">
    <property type="entry name" value="ThrRS/AlaRS common domain"/>
    <property type="match status" value="1"/>
</dbReference>
<dbReference type="SUPFAM" id="SSF50447">
    <property type="entry name" value="Translation proteins"/>
    <property type="match status" value="1"/>
</dbReference>
<dbReference type="PROSITE" id="PS50860">
    <property type="entry name" value="AA_TRNA_LIGASE_II_ALA"/>
    <property type="match status" value="1"/>
</dbReference>
<comment type="function">
    <text evidence="1">Catalyzes the attachment of alanine to tRNA(Ala) in a two-step reaction: alanine is first activated by ATP to form Ala-AMP and then transferred to the acceptor end of tRNA(Ala). Also edits incorrectly charged Ser-tRNA(Ala) and Gly-tRNA(Ala) via its editing domain.</text>
</comment>
<comment type="catalytic activity">
    <reaction evidence="1">
        <text>tRNA(Ala) + L-alanine + ATP = L-alanyl-tRNA(Ala) + AMP + diphosphate</text>
        <dbReference type="Rhea" id="RHEA:12540"/>
        <dbReference type="Rhea" id="RHEA-COMP:9657"/>
        <dbReference type="Rhea" id="RHEA-COMP:9923"/>
        <dbReference type="ChEBI" id="CHEBI:30616"/>
        <dbReference type="ChEBI" id="CHEBI:33019"/>
        <dbReference type="ChEBI" id="CHEBI:57972"/>
        <dbReference type="ChEBI" id="CHEBI:78442"/>
        <dbReference type="ChEBI" id="CHEBI:78497"/>
        <dbReference type="ChEBI" id="CHEBI:456215"/>
        <dbReference type="EC" id="6.1.1.7"/>
    </reaction>
</comment>
<comment type="cofactor">
    <cofactor evidence="1">
        <name>Zn(2+)</name>
        <dbReference type="ChEBI" id="CHEBI:29105"/>
    </cofactor>
    <text evidence="1">Binds 1 zinc ion per subunit.</text>
</comment>
<comment type="subcellular location">
    <subcellularLocation>
        <location evidence="1">Cytoplasm</location>
    </subcellularLocation>
</comment>
<comment type="domain">
    <text evidence="1">Consists of three domains; the N-terminal catalytic domain, the editing domain and the C-terminal C-Ala domain. The editing domain removes incorrectly charged amino acids, while the C-Ala domain, along with tRNA(Ala), serves as a bridge to cooperatively bring together the editing and aminoacylation centers thus stimulating deacylation of misacylated tRNAs.</text>
</comment>
<comment type="similarity">
    <text evidence="1">Belongs to the class-II aminoacyl-tRNA synthetase family.</text>
</comment>
<evidence type="ECO:0000255" key="1">
    <source>
        <dbReference type="HAMAP-Rule" id="MF_00036"/>
    </source>
</evidence>
<protein>
    <recommendedName>
        <fullName evidence="1">Alanine--tRNA ligase</fullName>
        <ecNumber evidence="1">6.1.1.7</ecNumber>
    </recommendedName>
    <alternativeName>
        <fullName evidence="1">Alanyl-tRNA synthetase</fullName>
        <shortName evidence="1">AlaRS</shortName>
    </alternativeName>
</protein>